<name>NUSB_LIGS1</name>
<comment type="function">
    <text evidence="1">Involved in transcription antitermination. Required for transcription of ribosomal RNA (rRNA) genes. Binds specifically to the boxA antiterminator sequence of the ribosomal RNA (rrn) operons.</text>
</comment>
<comment type="similarity">
    <text evidence="1">Belongs to the NusB family.</text>
</comment>
<keyword id="KW-1185">Reference proteome</keyword>
<keyword id="KW-0694">RNA-binding</keyword>
<keyword id="KW-0804">Transcription</keyword>
<keyword id="KW-0889">Transcription antitermination</keyword>
<keyword id="KW-0805">Transcription regulation</keyword>
<protein>
    <recommendedName>
        <fullName evidence="1">Transcription antitermination protein NusB</fullName>
    </recommendedName>
    <alternativeName>
        <fullName evidence="1">Antitermination factor NusB</fullName>
    </alternativeName>
</protein>
<gene>
    <name evidence="1" type="primary">nusB</name>
    <name type="ordered locus">LSL_0532</name>
</gene>
<sequence>MSLSRHDIRKIAFQTLFALGSNPDANSEDIYQELLDEDNNDSDLSYLNELVDGVLDHQSEIDMEITKYLRKNWNIGRLNKTDLIILRIAIFEIKYSDVASKIAVNEAVELAKEFSDDKSYKFVNAILQNLI</sequence>
<organism>
    <name type="scientific">Ligilactobacillus salivarius (strain UCC118)</name>
    <name type="common">Lactobacillus salivarius</name>
    <dbReference type="NCBI Taxonomy" id="362948"/>
    <lineage>
        <taxon>Bacteria</taxon>
        <taxon>Bacillati</taxon>
        <taxon>Bacillota</taxon>
        <taxon>Bacilli</taxon>
        <taxon>Lactobacillales</taxon>
        <taxon>Lactobacillaceae</taxon>
        <taxon>Ligilactobacillus</taxon>
    </lineage>
</organism>
<proteinExistence type="inferred from homology"/>
<dbReference type="EMBL" id="CP000233">
    <property type="protein sequence ID" value="ABD99341.1"/>
    <property type="molecule type" value="Genomic_DNA"/>
</dbReference>
<dbReference type="RefSeq" id="WP_003699843.1">
    <property type="nucleotide sequence ID" value="NC_007929.1"/>
</dbReference>
<dbReference type="RefSeq" id="YP_535424.1">
    <property type="nucleotide sequence ID" value="NC_007929.1"/>
</dbReference>
<dbReference type="SMR" id="Q1WUJ4"/>
<dbReference type="STRING" id="362948.LSL_0532"/>
<dbReference type="KEGG" id="lsl:LSL_0532"/>
<dbReference type="PATRIC" id="fig|362948.14.peg.610"/>
<dbReference type="HOGENOM" id="CLU_087843_3_2_9"/>
<dbReference type="OrthoDB" id="9811381at2"/>
<dbReference type="Proteomes" id="UP000006559">
    <property type="component" value="Chromosome"/>
</dbReference>
<dbReference type="GO" id="GO:0005829">
    <property type="term" value="C:cytosol"/>
    <property type="evidence" value="ECO:0007669"/>
    <property type="project" value="TreeGrafter"/>
</dbReference>
<dbReference type="GO" id="GO:0003723">
    <property type="term" value="F:RNA binding"/>
    <property type="evidence" value="ECO:0007669"/>
    <property type="project" value="UniProtKB-UniRule"/>
</dbReference>
<dbReference type="GO" id="GO:0006353">
    <property type="term" value="P:DNA-templated transcription termination"/>
    <property type="evidence" value="ECO:0007669"/>
    <property type="project" value="UniProtKB-UniRule"/>
</dbReference>
<dbReference type="GO" id="GO:0031564">
    <property type="term" value="P:transcription antitermination"/>
    <property type="evidence" value="ECO:0007669"/>
    <property type="project" value="UniProtKB-KW"/>
</dbReference>
<dbReference type="Gene3D" id="1.10.940.10">
    <property type="entry name" value="NusB-like"/>
    <property type="match status" value="1"/>
</dbReference>
<dbReference type="HAMAP" id="MF_00073">
    <property type="entry name" value="NusB"/>
    <property type="match status" value="1"/>
</dbReference>
<dbReference type="InterPro" id="IPR035926">
    <property type="entry name" value="NusB-like_sf"/>
</dbReference>
<dbReference type="InterPro" id="IPR011605">
    <property type="entry name" value="NusB_fam"/>
</dbReference>
<dbReference type="InterPro" id="IPR006027">
    <property type="entry name" value="NusB_RsmB_TIM44"/>
</dbReference>
<dbReference type="NCBIfam" id="TIGR01951">
    <property type="entry name" value="nusB"/>
    <property type="match status" value="1"/>
</dbReference>
<dbReference type="NCBIfam" id="NF001223">
    <property type="entry name" value="PRK00202.1-1"/>
    <property type="match status" value="1"/>
</dbReference>
<dbReference type="PANTHER" id="PTHR11078:SF3">
    <property type="entry name" value="ANTITERMINATION NUSB DOMAIN-CONTAINING PROTEIN"/>
    <property type="match status" value="1"/>
</dbReference>
<dbReference type="PANTHER" id="PTHR11078">
    <property type="entry name" value="N UTILIZATION SUBSTANCE PROTEIN B-RELATED"/>
    <property type="match status" value="1"/>
</dbReference>
<dbReference type="Pfam" id="PF01029">
    <property type="entry name" value="NusB"/>
    <property type="match status" value="1"/>
</dbReference>
<dbReference type="SUPFAM" id="SSF48013">
    <property type="entry name" value="NusB-like"/>
    <property type="match status" value="1"/>
</dbReference>
<accession>Q1WUJ4</accession>
<evidence type="ECO:0000255" key="1">
    <source>
        <dbReference type="HAMAP-Rule" id="MF_00073"/>
    </source>
</evidence>
<feature type="chain" id="PRO_0000265535" description="Transcription antitermination protein NusB">
    <location>
        <begin position="1"/>
        <end position="131"/>
    </location>
</feature>
<reference key="1">
    <citation type="journal article" date="2006" name="Proc. Natl. Acad. Sci. U.S.A.">
        <title>Multireplicon genome architecture of Lactobacillus salivarius.</title>
        <authorList>
            <person name="Claesson M.J."/>
            <person name="Li Y."/>
            <person name="Leahy S."/>
            <person name="Canchaya C."/>
            <person name="van Pijkeren J.P."/>
            <person name="Cerdeno-Tarraga A.M."/>
            <person name="Parkhill J."/>
            <person name="Flynn S."/>
            <person name="O'Sullivan G.C."/>
            <person name="Collins J.K."/>
            <person name="Higgins D."/>
            <person name="Shanahan F."/>
            <person name="Fitzgerald G.F."/>
            <person name="van Sinderen D."/>
            <person name="O'Toole P.W."/>
        </authorList>
    </citation>
    <scope>NUCLEOTIDE SEQUENCE [LARGE SCALE GENOMIC DNA]</scope>
    <source>
        <strain>UCC118</strain>
    </source>
</reference>